<dbReference type="EMBL" id="AM902716">
    <property type="protein sequence ID" value="CAP41896.1"/>
    <property type="molecule type" value="Genomic_DNA"/>
</dbReference>
<dbReference type="SMR" id="A9IGC3"/>
<dbReference type="STRING" id="94624.Bpet1557"/>
<dbReference type="KEGG" id="bpt:Bpet1557"/>
<dbReference type="eggNOG" id="COG0443">
    <property type="taxonomic scope" value="Bacteria"/>
</dbReference>
<dbReference type="Proteomes" id="UP000001225">
    <property type="component" value="Chromosome"/>
</dbReference>
<dbReference type="GO" id="GO:0005524">
    <property type="term" value="F:ATP binding"/>
    <property type="evidence" value="ECO:0007669"/>
    <property type="project" value="UniProtKB-UniRule"/>
</dbReference>
<dbReference type="GO" id="GO:0140662">
    <property type="term" value="F:ATP-dependent protein folding chaperone"/>
    <property type="evidence" value="ECO:0007669"/>
    <property type="project" value="InterPro"/>
</dbReference>
<dbReference type="GO" id="GO:0051082">
    <property type="term" value="F:unfolded protein binding"/>
    <property type="evidence" value="ECO:0007669"/>
    <property type="project" value="InterPro"/>
</dbReference>
<dbReference type="CDD" id="cd10234">
    <property type="entry name" value="ASKHA_NBD_HSP70_DnaK-like"/>
    <property type="match status" value="1"/>
</dbReference>
<dbReference type="FunFam" id="2.60.34.10:FF:000014">
    <property type="entry name" value="Chaperone protein DnaK HSP70"/>
    <property type="match status" value="1"/>
</dbReference>
<dbReference type="FunFam" id="1.20.1270.10:FF:000001">
    <property type="entry name" value="Molecular chaperone DnaK"/>
    <property type="match status" value="1"/>
</dbReference>
<dbReference type="FunFam" id="3.30.420.40:FF:000004">
    <property type="entry name" value="Molecular chaperone DnaK"/>
    <property type="match status" value="1"/>
</dbReference>
<dbReference type="FunFam" id="3.90.640.10:FF:000003">
    <property type="entry name" value="Molecular chaperone DnaK"/>
    <property type="match status" value="1"/>
</dbReference>
<dbReference type="Gene3D" id="1.20.1270.10">
    <property type="match status" value="1"/>
</dbReference>
<dbReference type="Gene3D" id="3.30.420.40">
    <property type="match status" value="2"/>
</dbReference>
<dbReference type="Gene3D" id="3.90.640.10">
    <property type="entry name" value="Actin, Chain A, domain 4"/>
    <property type="match status" value="1"/>
</dbReference>
<dbReference type="Gene3D" id="2.60.34.10">
    <property type="entry name" value="Substrate Binding Domain Of DNAk, Chain A, domain 1"/>
    <property type="match status" value="1"/>
</dbReference>
<dbReference type="HAMAP" id="MF_00332">
    <property type="entry name" value="DnaK"/>
    <property type="match status" value="1"/>
</dbReference>
<dbReference type="InterPro" id="IPR043129">
    <property type="entry name" value="ATPase_NBD"/>
</dbReference>
<dbReference type="InterPro" id="IPR012725">
    <property type="entry name" value="Chaperone_DnaK"/>
</dbReference>
<dbReference type="InterPro" id="IPR018181">
    <property type="entry name" value="Heat_shock_70_CS"/>
</dbReference>
<dbReference type="InterPro" id="IPR029048">
    <property type="entry name" value="HSP70_C_sf"/>
</dbReference>
<dbReference type="InterPro" id="IPR029047">
    <property type="entry name" value="HSP70_peptide-bd_sf"/>
</dbReference>
<dbReference type="InterPro" id="IPR013126">
    <property type="entry name" value="Hsp_70_fam"/>
</dbReference>
<dbReference type="NCBIfam" id="NF001413">
    <property type="entry name" value="PRK00290.1"/>
    <property type="match status" value="1"/>
</dbReference>
<dbReference type="NCBIfam" id="NF003520">
    <property type="entry name" value="PRK05183.1"/>
    <property type="match status" value="1"/>
</dbReference>
<dbReference type="NCBIfam" id="TIGR02350">
    <property type="entry name" value="prok_dnaK"/>
    <property type="match status" value="1"/>
</dbReference>
<dbReference type="PANTHER" id="PTHR19375">
    <property type="entry name" value="HEAT SHOCK PROTEIN 70KDA"/>
    <property type="match status" value="1"/>
</dbReference>
<dbReference type="Pfam" id="PF00012">
    <property type="entry name" value="HSP70"/>
    <property type="match status" value="1"/>
</dbReference>
<dbReference type="PRINTS" id="PR00301">
    <property type="entry name" value="HEATSHOCK70"/>
</dbReference>
<dbReference type="SUPFAM" id="SSF53067">
    <property type="entry name" value="Actin-like ATPase domain"/>
    <property type="match status" value="2"/>
</dbReference>
<dbReference type="SUPFAM" id="SSF100934">
    <property type="entry name" value="Heat shock protein 70kD (HSP70), C-terminal subdomain"/>
    <property type="match status" value="1"/>
</dbReference>
<dbReference type="SUPFAM" id="SSF100920">
    <property type="entry name" value="Heat shock protein 70kD (HSP70), peptide-binding domain"/>
    <property type="match status" value="1"/>
</dbReference>
<dbReference type="PROSITE" id="PS00297">
    <property type="entry name" value="HSP70_1"/>
    <property type="match status" value="1"/>
</dbReference>
<dbReference type="PROSITE" id="PS00329">
    <property type="entry name" value="HSP70_2"/>
    <property type="match status" value="1"/>
</dbReference>
<dbReference type="PROSITE" id="PS01036">
    <property type="entry name" value="HSP70_3"/>
    <property type="match status" value="1"/>
</dbReference>
<evidence type="ECO:0000255" key="1">
    <source>
        <dbReference type="HAMAP-Rule" id="MF_00332"/>
    </source>
</evidence>
<evidence type="ECO:0000256" key="2">
    <source>
        <dbReference type="SAM" id="MobiDB-lite"/>
    </source>
</evidence>
<keyword id="KW-0067">ATP-binding</keyword>
<keyword id="KW-0143">Chaperone</keyword>
<keyword id="KW-0547">Nucleotide-binding</keyword>
<keyword id="KW-0597">Phosphoprotein</keyword>
<keyword id="KW-0346">Stress response</keyword>
<reference key="1">
    <citation type="journal article" date="2008" name="BMC Genomics">
        <title>The missing link: Bordetella petrii is endowed with both the metabolic versatility of environmental bacteria and virulence traits of pathogenic Bordetellae.</title>
        <authorList>
            <person name="Gross R."/>
            <person name="Guzman C.A."/>
            <person name="Sebaihia M."/>
            <person name="Martin dos Santos V.A.P."/>
            <person name="Pieper D.H."/>
            <person name="Koebnik R."/>
            <person name="Lechner M."/>
            <person name="Bartels D."/>
            <person name="Buhrmester J."/>
            <person name="Choudhuri J.V."/>
            <person name="Ebensen T."/>
            <person name="Gaigalat L."/>
            <person name="Herrmann S."/>
            <person name="Khachane A.N."/>
            <person name="Larisch C."/>
            <person name="Link S."/>
            <person name="Linke B."/>
            <person name="Meyer F."/>
            <person name="Mormann S."/>
            <person name="Nakunst D."/>
            <person name="Rueckert C."/>
            <person name="Schneiker-Bekel S."/>
            <person name="Schulze K."/>
            <person name="Voerholter F.-J."/>
            <person name="Yevsa T."/>
            <person name="Engle J.T."/>
            <person name="Goldman W.E."/>
            <person name="Puehler A."/>
            <person name="Goebel U.B."/>
            <person name="Goesmann A."/>
            <person name="Bloecker H."/>
            <person name="Kaiser O."/>
            <person name="Martinez-Arias R."/>
        </authorList>
    </citation>
    <scope>NUCLEOTIDE SEQUENCE [LARGE SCALE GENOMIC DNA]</scope>
    <source>
        <strain>ATCC BAA-461 / DSM 12804 / CCUG 43448</strain>
    </source>
</reference>
<protein>
    <recommendedName>
        <fullName evidence="1">Chaperone protein DnaK</fullName>
    </recommendedName>
    <alternativeName>
        <fullName evidence="1">HSP70</fullName>
    </alternativeName>
    <alternativeName>
        <fullName evidence="1">Heat shock 70 kDa protein</fullName>
    </alternativeName>
    <alternativeName>
        <fullName evidence="1">Heat shock protein 70</fullName>
    </alternativeName>
</protein>
<sequence>MSKIIGIDLGTTNSCVAVMDGGQVKIIENAEGARTTPSIVAYMDDGETLVGAPAKRQAVTNPKNTLYAVKRLIGRKFDEKAVQKDIDLMPYSIVKADNGDAWVEARGKKIAPPQVSADVLRKMKKTAEDYLGEEVTEAVITVPAYFNDSQRQATKDAGRIAGLEVKRIINEPTAAALAFGLDKSEKGDRKIAVYDLGGGTFDVSIIEIADVDGEKQFEVLSTNGDTFLGGEDFDQRIIDYIIGEFKKEQGVDLSKDVLALQRLKEAAEKAKIELSSSQQTEINLPYITADASGPKHLNLKITRAKLEALVEELIERTIDPCRVAIKDAGVKVSEIDDVILVGGMTRMPKVQEKVKEFFGKDPRKDVNPDEAVAAGAAIQGSVLSGDRKDVLLLDVTPLSLGIETLGGVMTKMIQKNTTIPTRFSQTFSTADDNQPAVTIKVFQGEREIAAGNKSLGEFNLEGIPPAPRGLPQIEVTFDIDANGILHVSAKDKGTGKENKITIKANSGLSEDEIQRMVKDAEANAEEDHRIAELAQTRNQADALVHATRKSLTEYGEKLEASEKEAIEGAIKELEDVLKDGDKAAIDAKVEALSTASQKLGEKMYADMQAAQAAQQQAADEAKPVDENVVDADFKEVKRDQ</sequence>
<proteinExistence type="inferred from homology"/>
<accession>A9IGC3</accession>
<gene>
    <name evidence="1" type="primary">dnaK</name>
    <name type="ordered locus">Bpet1557</name>
</gene>
<feature type="chain" id="PRO_1000119675" description="Chaperone protein DnaK">
    <location>
        <begin position="1"/>
        <end position="640"/>
    </location>
</feature>
<feature type="region of interest" description="Disordered" evidence="2">
    <location>
        <begin position="614"/>
        <end position="640"/>
    </location>
</feature>
<feature type="compositionally biased region" description="Basic and acidic residues" evidence="2">
    <location>
        <begin position="619"/>
        <end position="640"/>
    </location>
</feature>
<feature type="modified residue" description="Phosphothreonine; by autocatalysis" evidence="1">
    <location>
        <position position="200"/>
    </location>
</feature>
<name>DNAK_BORPD</name>
<organism>
    <name type="scientific">Bordetella petrii (strain ATCC BAA-461 / DSM 12804 / CCUG 43448)</name>
    <dbReference type="NCBI Taxonomy" id="340100"/>
    <lineage>
        <taxon>Bacteria</taxon>
        <taxon>Pseudomonadati</taxon>
        <taxon>Pseudomonadota</taxon>
        <taxon>Betaproteobacteria</taxon>
        <taxon>Burkholderiales</taxon>
        <taxon>Alcaligenaceae</taxon>
        <taxon>Bordetella</taxon>
    </lineage>
</organism>
<comment type="function">
    <text evidence="1">Acts as a chaperone.</text>
</comment>
<comment type="induction">
    <text evidence="1">By stress conditions e.g. heat shock.</text>
</comment>
<comment type="similarity">
    <text evidence="1">Belongs to the heat shock protein 70 family.</text>
</comment>